<accession>Q59803</accession>
<comment type="function">
    <text evidence="1 2">Catalyzes the anti-1,4-elimination of the C-3 phosphate and the C-6 proR hydrogen from 5-enolpyruvylshikimate-3-phosphate (EPSP) to yield chorismate, which is the branch point compound that serves as the starting substrate for the three terminal pathways of aromatic amino acid biosynthesis. This reaction introduces a second double bond into the aromatic ring system.</text>
</comment>
<comment type="catalytic activity">
    <reaction evidence="1 2">
        <text>5-O-(1-carboxyvinyl)-3-phosphoshikimate = chorismate + phosphate</text>
        <dbReference type="Rhea" id="RHEA:21020"/>
        <dbReference type="ChEBI" id="CHEBI:29748"/>
        <dbReference type="ChEBI" id="CHEBI:43474"/>
        <dbReference type="ChEBI" id="CHEBI:57701"/>
        <dbReference type="EC" id="4.2.3.5"/>
    </reaction>
</comment>
<comment type="cofactor">
    <cofactor evidence="1">
        <name>FMNH2</name>
        <dbReference type="ChEBI" id="CHEBI:57618"/>
    </cofactor>
    <text evidence="1">Reduced FMN (FMNH(2)).</text>
</comment>
<comment type="biophysicochemical properties">
    <kinetics>
        <KM evidence="2">12.7 uM for EPSP (at pH 7 and 25 degrees Celsius)</KM>
    </kinetics>
</comment>
<comment type="pathway">
    <text evidence="1">Metabolic intermediate biosynthesis; chorismate biosynthesis; chorismate from D-erythrose 4-phosphate and phosphoenolpyruvate: step 7/7.</text>
</comment>
<comment type="subunit">
    <text evidence="1 2">Homotetramer.</text>
</comment>
<comment type="mass spectrometry" mass="43024.0" method="Electrospray" evidence="2"/>
<comment type="similarity">
    <text evidence="1">Belongs to the chorismate synthase family.</text>
</comment>
<proteinExistence type="evidence at protein level"/>
<reference key="1">
    <citation type="journal article" date="1996" name="Microbiology">
        <title>Chorismate synthase from Staphylococcus aureus.</title>
        <authorList>
            <person name="Horsburgh M.J."/>
            <person name="Foster T.J."/>
            <person name="Barth P.T."/>
            <person name="Coggins J.R."/>
        </authorList>
    </citation>
    <scope>NUCLEOTIDE SEQUENCE [GENOMIC DNA]</scope>
    <scope>PROTEIN SEQUENCE OF 1-28</scope>
    <scope>FUNCTION</scope>
    <scope>CATALYTIC ACTIVITY</scope>
    <scope>BIOPHYSICOCHEMICAL PROPERTIES</scope>
    <scope>MASS SPECTROMETRY</scope>
    <scope>SUBUNIT</scope>
    <source>
        <strain>601055</strain>
    </source>
</reference>
<gene>
    <name evidence="1 3" type="primary">aroC</name>
</gene>
<dbReference type="EC" id="4.2.3.5" evidence="1 2"/>
<dbReference type="EMBL" id="U31979">
    <property type="protein sequence ID" value="AAB41907.1"/>
    <property type="molecule type" value="Genomic_DNA"/>
</dbReference>
<dbReference type="SMR" id="Q59803"/>
<dbReference type="UniPathway" id="UPA00053">
    <property type="reaction ID" value="UER00090"/>
</dbReference>
<dbReference type="GO" id="GO:0005829">
    <property type="term" value="C:cytosol"/>
    <property type="evidence" value="ECO:0007669"/>
    <property type="project" value="TreeGrafter"/>
</dbReference>
<dbReference type="GO" id="GO:0004107">
    <property type="term" value="F:chorismate synthase activity"/>
    <property type="evidence" value="ECO:0007669"/>
    <property type="project" value="UniProtKB-UniRule"/>
</dbReference>
<dbReference type="GO" id="GO:0010181">
    <property type="term" value="F:FMN binding"/>
    <property type="evidence" value="ECO:0007669"/>
    <property type="project" value="TreeGrafter"/>
</dbReference>
<dbReference type="GO" id="GO:0008652">
    <property type="term" value="P:amino acid biosynthetic process"/>
    <property type="evidence" value="ECO:0007669"/>
    <property type="project" value="UniProtKB-KW"/>
</dbReference>
<dbReference type="GO" id="GO:0009073">
    <property type="term" value="P:aromatic amino acid family biosynthetic process"/>
    <property type="evidence" value="ECO:0007669"/>
    <property type="project" value="UniProtKB-KW"/>
</dbReference>
<dbReference type="GO" id="GO:0009423">
    <property type="term" value="P:chorismate biosynthetic process"/>
    <property type="evidence" value="ECO:0007669"/>
    <property type="project" value="UniProtKB-UniRule"/>
</dbReference>
<dbReference type="CDD" id="cd07304">
    <property type="entry name" value="Chorismate_synthase"/>
    <property type="match status" value="1"/>
</dbReference>
<dbReference type="FunFam" id="3.60.150.10:FF:000002">
    <property type="entry name" value="Chorismate synthase"/>
    <property type="match status" value="1"/>
</dbReference>
<dbReference type="Gene3D" id="3.60.150.10">
    <property type="entry name" value="Chorismate synthase AroC"/>
    <property type="match status" value="1"/>
</dbReference>
<dbReference type="HAMAP" id="MF_00300">
    <property type="entry name" value="Chorismate_synth"/>
    <property type="match status" value="1"/>
</dbReference>
<dbReference type="InterPro" id="IPR000453">
    <property type="entry name" value="Chorismate_synth"/>
</dbReference>
<dbReference type="InterPro" id="IPR035904">
    <property type="entry name" value="Chorismate_synth_AroC_sf"/>
</dbReference>
<dbReference type="InterPro" id="IPR020541">
    <property type="entry name" value="Chorismate_synthase_CS"/>
</dbReference>
<dbReference type="NCBIfam" id="TIGR00033">
    <property type="entry name" value="aroC"/>
    <property type="match status" value="1"/>
</dbReference>
<dbReference type="NCBIfam" id="NF003793">
    <property type="entry name" value="PRK05382.1"/>
    <property type="match status" value="1"/>
</dbReference>
<dbReference type="PANTHER" id="PTHR21085">
    <property type="entry name" value="CHORISMATE SYNTHASE"/>
    <property type="match status" value="1"/>
</dbReference>
<dbReference type="PANTHER" id="PTHR21085:SF0">
    <property type="entry name" value="CHORISMATE SYNTHASE"/>
    <property type="match status" value="1"/>
</dbReference>
<dbReference type="Pfam" id="PF01264">
    <property type="entry name" value="Chorismate_synt"/>
    <property type="match status" value="1"/>
</dbReference>
<dbReference type="PIRSF" id="PIRSF001456">
    <property type="entry name" value="Chorismate_synth"/>
    <property type="match status" value="1"/>
</dbReference>
<dbReference type="SUPFAM" id="SSF103263">
    <property type="entry name" value="Chorismate synthase, AroC"/>
    <property type="match status" value="1"/>
</dbReference>
<dbReference type="PROSITE" id="PS00787">
    <property type="entry name" value="CHORISMATE_SYNTHASE_1"/>
    <property type="match status" value="1"/>
</dbReference>
<dbReference type="PROSITE" id="PS00788">
    <property type="entry name" value="CHORISMATE_SYNTHASE_2"/>
    <property type="match status" value="1"/>
</dbReference>
<dbReference type="PROSITE" id="PS00789">
    <property type="entry name" value="CHORISMATE_SYNTHASE_3"/>
    <property type="match status" value="1"/>
</dbReference>
<feature type="chain" id="PRO_0000140646" description="Chorismate synthase">
    <location>
        <begin position="1"/>
        <end position="388"/>
    </location>
</feature>
<feature type="binding site" evidence="1">
    <location>
        <position position="39"/>
    </location>
    <ligand>
        <name>NADP(+)</name>
        <dbReference type="ChEBI" id="CHEBI:58349"/>
    </ligand>
</feature>
<feature type="binding site" evidence="1">
    <location>
        <position position="45"/>
    </location>
    <ligand>
        <name>NADP(+)</name>
        <dbReference type="ChEBI" id="CHEBI:58349"/>
    </ligand>
</feature>
<feature type="binding site" evidence="1">
    <location>
        <begin position="132"/>
        <end position="134"/>
    </location>
    <ligand>
        <name>FMN</name>
        <dbReference type="ChEBI" id="CHEBI:58210"/>
    </ligand>
</feature>
<feature type="binding site" evidence="1">
    <location>
        <begin position="251"/>
        <end position="252"/>
    </location>
    <ligand>
        <name>FMN</name>
        <dbReference type="ChEBI" id="CHEBI:58210"/>
    </ligand>
</feature>
<feature type="binding site" evidence="1">
    <location>
        <position position="296"/>
    </location>
    <ligand>
        <name>FMN</name>
        <dbReference type="ChEBI" id="CHEBI:58210"/>
    </ligand>
</feature>
<feature type="binding site" evidence="1">
    <location>
        <begin position="311"/>
        <end position="315"/>
    </location>
    <ligand>
        <name>FMN</name>
        <dbReference type="ChEBI" id="CHEBI:58210"/>
    </ligand>
</feature>
<feature type="binding site" evidence="1">
    <location>
        <position position="337"/>
    </location>
    <ligand>
        <name>FMN</name>
        <dbReference type="ChEBI" id="CHEBI:58210"/>
    </ligand>
</feature>
<evidence type="ECO:0000255" key="1">
    <source>
        <dbReference type="HAMAP-Rule" id="MF_00300"/>
    </source>
</evidence>
<evidence type="ECO:0000269" key="2">
    <source>
    </source>
</evidence>
<evidence type="ECO:0000303" key="3">
    <source>
    </source>
</evidence>
<keyword id="KW-0028">Amino-acid biosynthesis</keyword>
<keyword id="KW-0057">Aromatic amino acid biosynthesis</keyword>
<keyword id="KW-0903">Direct protein sequencing</keyword>
<keyword id="KW-0274">FAD</keyword>
<keyword id="KW-0285">Flavoprotein</keyword>
<keyword id="KW-0288">FMN</keyword>
<keyword id="KW-0456">Lyase</keyword>
<keyword id="KW-0521">NADP</keyword>
<organism>
    <name type="scientific">Staphylococcus aureus</name>
    <dbReference type="NCBI Taxonomy" id="1280"/>
    <lineage>
        <taxon>Bacteria</taxon>
        <taxon>Bacillati</taxon>
        <taxon>Bacillota</taxon>
        <taxon>Bacilli</taxon>
        <taxon>Bacillales</taxon>
        <taxon>Staphylococcaceae</taxon>
        <taxon>Staphylococcus</taxon>
    </lineage>
</organism>
<sequence length="388" mass="43060">MRYLTSGESHGPQLTVIVEGVPANLEVKVEDINKEMFKRQGGYGRGRRMQIEKDTVEIVSGVRNGYTLGSPITMVVTNDDFTHWRKIMGRAPISDEERENMKRTITKPRPGHADLLGGMKYNHRDLRNVLERSSARETAARVAVGALCKVLLEQLDIEIYSRVVEIGGIKDKDFYDSETFKANLDRNDVRVIDDGIAQAMRDKIDEAKTDGDSIGGVVQVVVENMPVGVGSYVHYDRKLDGRIAQGVVSINAFKGVSFGEGFKAAEKPGSEIQDEILYNTELGYYRGSNHLGGLEGGMSNGMPIIVNGVMKPIPTLYKPLNSVDINTKEDFKATIERSDSCAVPAASIVCEHVVAFAIAKALLEEFQSNHIEQLKQQIIERRQLNIEF</sequence>
<protein>
    <recommendedName>
        <fullName evidence="1 3">Chorismate synthase</fullName>
        <shortName evidence="1">CS</shortName>
        <ecNumber evidence="1 2">4.2.3.5</ecNumber>
    </recommendedName>
    <alternativeName>
        <fullName evidence="1">5-enolpyruvylshikimate-3-phosphate phospholyase</fullName>
    </alternativeName>
</protein>
<name>AROC_STAAU</name>